<organism>
    <name type="scientific">Homo sapiens</name>
    <name type="common">Human</name>
    <dbReference type="NCBI Taxonomy" id="9606"/>
    <lineage>
        <taxon>Eukaryota</taxon>
        <taxon>Metazoa</taxon>
        <taxon>Chordata</taxon>
        <taxon>Craniata</taxon>
        <taxon>Vertebrata</taxon>
        <taxon>Euteleostomi</taxon>
        <taxon>Mammalia</taxon>
        <taxon>Eutheria</taxon>
        <taxon>Euarchontoglires</taxon>
        <taxon>Primates</taxon>
        <taxon>Haplorrhini</taxon>
        <taxon>Catarrhini</taxon>
        <taxon>Hominidae</taxon>
        <taxon>Homo</taxon>
    </lineage>
</organism>
<dbReference type="EMBL" id="AB091373">
    <property type="protein sequence ID" value="BAE93189.1"/>
    <property type="molecule type" value="mRNA"/>
</dbReference>
<dbReference type="EMBL" id="AB091374">
    <property type="protein sequence ID" value="BAE93190.1"/>
    <property type="molecule type" value="mRNA"/>
</dbReference>
<dbReference type="EMBL" id="AB091375">
    <property type="protein sequence ID" value="BAE93191.1"/>
    <property type="molecule type" value="mRNA"/>
</dbReference>
<dbReference type="EMBL" id="AB091376">
    <property type="protein sequence ID" value="BAE93192.1"/>
    <property type="molecule type" value="mRNA"/>
</dbReference>
<dbReference type="EMBL" id="AC010332">
    <property type="status" value="NOT_ANNOTATED_CDS"/>
    <property type="molecule type" value="Genomic_DNA"/>
</dbReference>
<dbReference type="SMR" id="Q1T7F1"/>
<dbReference type="BioMuta" id="-"/>
<dbReference type="AGR" id="HGNC:26449"/>
<dbReference type="neXtProt" id="NX_Q1T7F1"/>
<dbReference type="InParanoid" id="Q1T7F1"/>
<dbReference type="PAN-GO" id="Q1T7F1">
    <property type="GO annotations" value="0 GO annotations based on evolutionary models"/>
</dbReference>
<dbReference type="Pharos" id="Q1T7F1">
    <property type="development level" value="Tdark"/>
</dbReference>
<dbReference type="Proteomes" id="UP000005640">
    <property type="component" value="Unplaced"/>
</dbReference>
<dbReference type="RNAct" id="Q1T7F1">
    <property type="molecule type" value="protein"/>
</dbReference>
<dbReference type="GO" id="GO:0005737">
    <property type="term" value="C:cytoplasm"/>
    <property type="evidence" value="ECO:0007669"/>
    <property type="project" value="UniProtKB-SubCell"/>
</dbReference>
<comment type="subcellular location">
    <subcellularLocation>
        <location evidence="1">Cytoplasm</location>
    </subcellularLocation>
    <text>No secretion detected.</text>
</comment>
<comment type="tissue specificity">
    <text evidence="1">Expressed in placenta, heart, lung, liver, pancreas, skeletal muscle and brain.</text>
</comment>
<comment type="caution">
    <text evidence="2">Product of a dubious gene prediction. Identified as a novel protein related to chemokines on the basis of a 3D profile-based proteome-wide analysis (PubMed:22586462).</text>
</comment>
<protein>
    <recommendedName>
        <fullName>Putative chemokine-related protein B42</fullName>
    </recommendedName>
</protein>
<reference key="1">
    <citation type="submission" date="2002-09" db="EMBL/GenBank/DDBJ databases">
        <title>Identification of a novel Kruppel-like zinc finger protein.</title>
        <authorList>
            <person name="Maegawa S."/>
            <person name="Shiraishi M."/>
            <person name="Otsuka S."/>
            <person name="Meguro M."/>
            <person name="Mitsuya K."/>
            <person name="Nanba E."/>
            <person name="Oshimura M."/>
        </authorList>
    </citation>
    <scope>NUCLEOTIDE SEQUENCE [MRNA]</scope>
</reference>
<reference key="2">
    <citation type="journal article" date="2004" name="Nature">
        <title>The DNA sequence and biology of human chromosome 19.</title>
        <authorList>
            <person name="Grimwood J."/>
            <person name="Gordon L.A."/>
            <person name="Olsen A.S."/>
            <person name="Terry A."/>
            <person name="Schmutz J."/>
            <person name="Lamerdin J.E."/>
            <person name="Hellsten U."/>
            <person name="Goodstein D."/>
            <person name="Couronne O."/>
            <person name="Tran-Gyamfi M."/>
            <person name="Aerts A."/>
            <person name="Altherr M."/>
            <person name="Ashworth L."/>
            <person name="Bajorek E."/>
            <person name="Black S."/>
            <person name="Branscomb E."/>
            <person name="Caenepeel S."/>
            <person name="Carrano A.V."/>
            <person name="Caoile C."/>
            <person name="Chan Y.M."/>
            <person name="Christensen M."/>
            <person name="Cleland C.A."/>
            <person name="Copeland A."/>
            <person name="Dalin E."/>
            <person name="Dehal P."/>
            <person name="Denys M."/>
            <person name="Detter J.C."/>
            <person name="Escobar J."/>
            <person name="Flowers D."/>
            <person name="Fotopulos D."/>
            <person name="Garcia C."/>
            <person name="Georgescu A.M."/>
            <person name="Glavina T."/>
            <person name="Gomez M."/>
            <person name="Gonzales E."/>
            <person name="Groza M."/>
            <person name="Hammon N."/>
            <person name="Hawkins T."/>
            <person name="Haydu L."/>
            <person name="Ho I."/>
            <person name="Huang W."/>
            <person name="Israni S."/>
            <person name="Jett J."/>
            <person name="Kadner K."/>
            <person name="Kimball H."/>
            <person name="Kobayashi A."/>
            <person name="Larionov V."/>
            <person name="Leem S.-H."/>
            <person name="Lopez F."/>
            <person name="Lou Y."/>
            <person name="Lowry S."/>
            <person name="Malfatti S."/>
            <person name="Martinez D."/>
            <person name="McCready P.M."/>
            <person name="Medina C."/>
            <person name="Morgan J."/>
            <person name="Nelson K."/>
            <person name="Nolan M."/>
            <person name="Ovcharenko I."/>
            <person name="Pitluck S."/>
            <person name="Pollard M."/>
            <person name="Popkie A.P."/>
            <person name="Predki P."/>
            <person name="Quan G."/>
            <person name="Ramirez L."/>
            <person name="Rash S."/>
            <person name="Retterer J."/>
            <person name="Rodriguez A."/>
            <person name="Rogers S."/>
            <person name="Salamov A."/>
            <person name="Salazar A."/>
            <person name="She X."/>
            <person name="Smith D."/>
            <person name="Slezak T."/>
            <person name="Solovyev V."/>
            <person name="Thayer N."/>
            <person name="Tice H."/>
            <person name="Tsai M."/>
            <person name="Ustaszewska A."/>
            <person name="Vo N."/>
            <person name="Wagner M."/>
            <person name="Wheeler J."/>
            <person name="Wu K."/>
            <person name="Xie G."/>
            <person name="Yang J."/>
            <person name="Dubchak I."/>
            <person name="Furey T.S."/>
            <person name="DeJong P."/>
            <person name="Dickson M."/>
            <person name="Gordon D."/>
            <person name="Eichler E.E."/>
            <person name="Pennacchio L.A."/>
            <person name="Richardson P."/>
            <person name="Stubbs L."/>
            <person name="Rokhsar D.S."/>
            <person name="Myers R.M."/>
            <person name="Rubin E.M."/>
            <person name="Lucas S.M."/>
        </authorList>
    </citation>
    <scope>NUCLEOTIDE SEQUENCE [LARGE SCALE GENOMIC DNA]</scope>
</reference>
<reference key="3">
    <citation type="journal article" date="2012" name="PLoS ONE">
        <title>3D profile-based approach to proteome-wide discovery of novel human chemokines.</title>
        <authorList>
            <person name="Tomczak A."/>
            <person name="Sontheimer J."/>
            <person name="Drechsel D."/>
            <person name="Hausdorf R."/>
            <person name="Gentzel M."/>
            <person name="Shevchenko A."/>
            <person name="Eichler S."/>
            <person name="Fahmy K."/>
            <person name="Buchholz F."/>
            <person name="Pisabarro M.T."/>
        </authorList>
    </citation>
    <scope>IDENTIFICATION</scope>
    <scope>SUBCELLULAR LOCATION</scope>
    <scope>TISSUE SPECIFICITY</scope>
    <scope>DISULFIDE BOND</scope>
</reference>
<name>CCB42_HUMAN</name>
<feature type="chain" id="PRO_0000422250" description="Putative chemokine-related protein B42">
    <location>
        <begin position="1"/>
        <end position="81"/>
    </location>
</feature>
<feature type="disulfide bond" evidence="2">
    <location>
        <begin position="7"/>
        <end position="73"/>
    </location>
</feature>
<feature type="disulfide bond" evidence="2">
    <location>
        <begin position="8"/>
        <end position="29"/>
    </location>
</feature>
<feature type="disulfide bond" evidence="2">
    <location>
        <begin position="11"/>
        <end position="45"/>
    </location>
</feature>
<sequence>MPLSDWCCGICEEAPLGRAYTQTWMETGCGPHGVTALGQQELKDCLRARSGGTASSVDWIMEAARGSLNVHNCLIKFGRRD</sequence>
<keyword id="KW-0963">Cytoplasm</keyword>
<keyword id="KW-1015">Disulfide bond</keyword>
<keyword id="KW-1185">Reference proteome</keyword>
<proteinExistence type="uncertain"/>
<evidence type="ECO:0000269" key="1">
    <source>
    </source>
</evidence>
<evidence type="ECO:0000305" key="2">
    <source>
    </source>
</evidence>
<accession>Q1T7F1</accession>